<organism>
    <name type="scientific">Parainfluenza virus 5 (strain W3)</name>
    <name type="common">PIV5</name>
    <name type="synonym">Simian virus 5</name>
    <dbReference type="NCBI Taxonomy" id="11208"/>
    <lineage>
        <taxon>Viruses</taxon>
        <taxon>Riboviria</taxon>
        <taxon>Orthornavirae</taxon>
        <taxon>Negarnaviricota</taxon>
        <taxon>Haploviricotina</taxon>
        <taxon>Monjiviricetes</taxon>
        <taxon>Mononegavirales</taxon>
        <taxon>Paramyxoviridae</taxon>
        <taxon>Rubulavirinae</taxon>
        <taxon>Orthorubulavirus</taxon>
        <taxon>Orthorubulavirus mammalis</taxon>
        <taxon>Mammalian orthorubulavirus 5</taxon>
    </lineage>
</organism>
<protein>
    <recommendedName>
        <fullName>RNA-directed RNA polymerase L</fullName>
        <shortName>Protein L</shortName>
    </recommendedName>
    <alternativeName>
        <fullName>Large structural protein</fullName>
    </alternativeName>
    <alternativeName>
        <fullName>Replicase</fullName>
    </alternativeName>
    <alternativeName>
        <fullName>Transcriptase</fullName>
    </alternativeName>
    <domain>
        <recommendedName>
            <fullName>RNA-directed RNA polymerase</fullName>
            <ecNumber evidence="3">2.7.7.48</ecNumber>
        </recommendedName>
    </domain>
    <domain>
        <recommendedName>
            <fullName evidence="2">GTP phosphohydrolase</fullName>
            <ecNumber evidence="2">3.6.1.-</ecNumber>
        </recommendedName>
    </domain>
    <domain>
        <recommendedName>
            <fullName evidence="8">GDP polyribonucleotidyltransferase</fullName>
            <ecNumber evidence="2">2.7.7.88</ecNumber>
        </recommendedName>
        <alternativeName>
            <fullName evidence="8">PRNTase</fullName>
        </alternativeName>
    </domain>
    <domain>
        <recommendedName>
            <fullName evidence="8">mRNA cap methyltransferase</fullName>
            <ecNumber evidence="2">2.1.1.375</ecNumber>
        </recommendedName>
        <alternativeName>
            <fullName evidence="2">mRNA (guanine-N(7)-)-methyltransferase</fullName>
            <shortName evidence="2">G-N7-MTase</shortName>
        </alternativeName>
        <alternativeName>
            <fullName evidence="2">mRNA (nucleoside-2'-O-)-methyltransferase</fullName>
            <shortName evidence="2">N1-2'-O-MTase</shortName>
        </alternativeName>
    </domain>
</protein>
<feature type="chain" id="PRO_0000142742" description="RNA-directed RNA polymerase L">
    <location>
        <begin position="1"/>
        <end position="2255"/>
    </location>
</feature>
<feature type="domain" description="RdRp catalytic" evidence="5">
    <location>
        <begin position="656"/>
        <end position="840"/>
    </location>
</feature>
<feature type="domain" description="Mononegavirus-type SAM-dependent 2'-O-MTase" evidence="6">
    <location>
        <begin position="1775"/>
        <end position="1988"/>
    </location>
</feature>
<feature type="region of interest" description="Disordered" evidence="7">
    <location>
        <begin position="618"/>
        <end position="649"/>
    </location>
</feature>
<feature type="compositionally biased region" description="Polar residues" evidence="7">
    <location>
        <begin position="623"/>
        <end position="635"/>
    </location>
</feature>
<feature type="binding site" evidence="4">
    <location>
        <begin position="1805"/>
        <end position="1814"/>
    </location>
    <ligand>
        <name>ATP</name>
        <dbReference type="ChEBI" id="CHEBI:30616"/>
    </ligand>
</feature>
<dbReference type="EC" id="2.7.7.48" evidence="3"/>
<dbReference type="EC" id="3.6.1.-" evidence="2"/>
<dbReference type="EC" id="2.7.7.88" evidence="2"/>
<dbReference type="EC" id="2.1.1.375" evidence="2"/>
<dbReference type="EMBL" id="M81721">
    <property type="protein sequence ID" value="AAA47879.1"/>
    <property type="molecule type" value="Genomic_RNA"/>
</dbReference>
<dbReference type="EMBL" id="AF052755">
    <property type="protein sequence ID" value="AAC95518.1"/>
    <property type="molecule type" value="Genomic_RNA"/>
</dbReference>
<dbReference type="PDB" id="6V85">
    <property type="method" value="EM"/>
    <property type="resolution" value="4.38 A"/>
    <property type="chains" value="A=1-2255"/>
</dbReference>
<dbReference type="PDB" id="6V86">
    <property type="method" value="EM"/>
    <property type="resolution" value="4.63 A"/>
    <property type="chains" value="A=1-2255"/>
</dbReference>
<dbReference type="PDBsum" id="6V85"/>
<dbReference type="PDBsum" id="6V86"/>
<dbReference type="EMDB" id="EMD-21095"/>
<dbReference type="EMDB" id="EMD-21096"/>
<dbReference type="SMR" id="Q88434"/>
<dbReference type="KEGG" id="vg:3160798"/>
<dbReference type="Proteomes" id="UP000007232">
    <property type="component" value="Segment"/>
</dbReference>
<dbReference type="GO" id="GO:0030430">
    <property type="term" value="C:host cell cytoplasm"/>
    <property type="evidence" value="ECO:0007669"/>
    <property type="project" value="UniProtKB-SubCell"/>
</dbReference>
<dbReference type="GO" id="GO:0044423">
    <property type="term" value="C:virion component"/>
    <property type="evidence" value="ECO:0007669"/>
    <property type="project" value="UniProtKB-KW"/>
</dbReference>
<dbReference type="GO" id="GO:0005524">
    <property type="term" value="F:ATP binding"/>
    <property type="evidence" value="ECO:0007669"/>
    <property type="project" value="UniProtKB-KW"/>
</dbReference>
<dbReference type="GO" id="GO:0003924">
    <property type="term" value="F:GTPase activity"/>
    <property type="evidence" value="ECO:0007669"/>
    <property type="project" value="RHEA"/>
</dbReference>
<dbReference type="GO" id="GO:0004482">
    <property type="term" value="F:mRNA 5'-cap (guanine-N7-)-methyltransferase activity"/>
    <property type="evidence" value="ECO:0007669"/>
    <property type="project" value="InterPro"/>
</dbReference>
<dbReference type="GO" id="GO:0003968">
    <property type="term" value="F:RNA-directed RNA polymerase activity"/>
    <property type="evidence" value="ECO:0007669"/>
    <property type="project" value="UniProtKB-KW"/>
</dbReference>
<dbReference type="Gene3D" id="3.40.50.12760">
    <property type="match status" value="1"/>
</dbReference>
<dbReference type="InterPro" id="IPR039736">
    <property type="entry name" value="L_poly_C"/>
</dbReference>
<dbReference type="InterPro" id="IPR026890">
    <property type="entry name" value="Mononeg_mRNAcap"/>
</dbReference>
<dbReference type="InterPro" id="IPR014023">
    <property type="entry name" value="Mononeg_RNA_pol_cat"/>
</dbReference>
<dbReference type="InterPro" id="IPR025786">
    <property type="entry name" value="Mononega_L_MeTrfase"/>
</dbReference>
<dbReference type="InterPro" id="IPR016269">
    <property type="entry name" value="RNA-dir_pol_paramyxovirus"/>
</dbReference>
<dbReference type="NCBIfam" id="TIGR04198">
    <property type="entry name" value="paramyx_RNAcap"/>
    <property type="match status" value="1"/>
</dbReference>
<dbReference type="Pfam" id="PF14318">
    <property type="entry name" value="Mononeg_mRNAcap"/>
    <property type="match status" value="1"/>
</dbReference>
<dbReference type="Pfam" id="PF00946">
    <property type="entry name" value="Mononeg_RNA_pol"/>
    <property type="match status" value="1"/>
</dbReference>
<dbReference type="PIRSF" id="PIRSF000830">
    <property type="entry name" value="RNA_pol_ParamyxoV"/>
    <property type="match status" value="1"/>
</dbReference>
<dbReference type="PROSITE" id="PS50526">
    <property type="entry name" value="RDRP_SSRNA_NEG_NONSEG"/>
    <property type="match status" value="1"/>
</dbReference>
<dbReference type="PROSITE" id="PS51590">
    <property type="entry name" value="SAM_MT_MNV_L"/>
    <property type="match status" value="1"/>
</dbReference>
<reference key="1">
    <citation type="journal article" date="1992" name="Virus Res.">
        <title>Molecular cloning of the NP and L genes of simian virus 5: identification of highly conserved domains in paramyxovirus NP and L proteins.</title>
        <authorList>
            <person name="Parks G.D."/>
            <person name="Ward C.D."/>
            <person name="Lamb R.A."/>
        </authorList>
    </citation>
    <scope>NUCLEOTIDE SEQUENCE [GENOMIC RNA]</scope>
</reference>
<evidence type="ECO:0000250" key="1"/>
<evidence type="ECO:0000250" key="2">
    <source>
        <dbReference type="UniProtKB" id="P03523"/>
    </source>
</evidence>
<evidence type="ECO:0000250" key="3">
    <source>
        <dbReference type="UniProtKB" id="P28887"/>
    </source>
</evidence>
<evidence type="ECO:0000255" key="4"/>
<evidence type="ECO:0000255" key="5">
    <source>
        <dbReference type="PROSITE-ProRule" id="PRU00539"/>
    </source>
</evidence>
<evidence type="ECO:0000255" key="6">
    <source>
        <dbReference type="PROSITE-ProRule" id="PRU00923"/>
    </source>
</evidence>
<evidence type="ECO:0000256" key="7">
    <source>
        <dbReference type="SAM" id="MobiDB-lite"/>
    </source>
</evidence>
<evidence type="ECO:0000305" key="8"/>
<sequence length="2255" mass="255926">MAGSREILLPEVHLNSPIVKHKLYYYILLGNLPNEIDLDDLGPLHNQNWNQIAHEESNLAQRLVNVRNFLITHIPDLRKGHWQEYVNVILWPRILPLIPDFKINDQLPLLKNWDKLVKESCSVINAGTSQCIQNLSYGLTGRGNLFTRSRELSGDRRDIDLKTVVAAWHDSDWKRISDFWIMIKFQMRQLIVRQTDHNDSDLITYIENREGIIIITPELVALFNTENHTLTYMTFEIVLMVSDMYEGRHNILSLCTVSTYLNPLKKRITYLLSLVDNLAFQIGDAVYNIIALLESFVYAQLQMSDPIPELRGQFHAFVCSEILDALRGTNSFTQDELRTVTTNLISPFQDLTPDLTAELLCIMRLWGHPMLTASQAAGKVRESMCAGKVLDFPTIMKTLAFFHTILINGYRRKHHGVWPPLNLPGNASKGLTELMNDNTEISYEFTLKHWKEVSLIKFKKCFDADAGEELSIFMKDKAISAPKQDWMSVFRRSLIKQRHQHHQVPLPNPFNRRLLLNFLGDDKFDPNVELQYVTSGEYLHDDTFCASYSLKEKEIKPDGRIFAKLTKRMRSCQVIAESLLANHAGKLMKENGVVMNQLSLTKSLLTMSQIGIISEKARKSTRDNINQPGFQNIQRNKSHHSKQVNQRDPSDDFELAASFLTTDLKKYCLQWRYQTIIPFAQSLNRMYGYPHLFEWIHLRLMRSTLYVGDPFNPPADTSQFDLDKVINGDIFIVSPRGGIEGLCQKAWTMISIAVIILSATESGTRVMSMVQGDNQAIAVTTRVPRSLPTLEKKTIAFRSCNLFFERLKCNNFGLGHHLKEQETIISSHFFVYSKRIFYQGRILTQALKNASKLCLTADVLGECTQSSCSNLATTVMRLTENGVEKDICFYLNIYMTIKQLSYDIIFPQVSIPGDQITLEYINNPHLVSRLALLPSQLGGLNYLSCSRLFNRNIGDPVVSAVADLKRLIKSGCMDYWILYNLLGRKPGNGSWATLAADPYSINIEYQYPPTTALKRHTQQALMELSTNPMLRGIFSDNAQAEENNLARFLLDREVIFPRVAHIIIEQTSVGRRKQIQGYLDSTRSIMRKSLEIKPLSNRKLNEILDYNINYLAYNLALLKNAIEPPTYLKAMTLETCSIDIARNLRKLSWAPLLGGRNLEGLETPDPIEITAGALIVGSGYCEQCAAGDNRFTWFFLPSGIEIGGDPRDNPPIRVPYIGSRTDERRVASMAYIRGASSSLKAVLRLAGVYIWAFGDTLENWIDALDLSHTRVNITLEQLQSLTPLPTSANLTHRLDDGTTTLKFTPASSYTFSSFTHISNDEQYLTINDKTADSNIIYQQLMITGLGILETWNNPPINRTFEESTLHLHTGASCCVRPVDSCILSEALTVKPHITVPYSNKFVFDEDPLSEYETAKLESLSFQAQLGNIDAVDMTGKLTLLSQFTARQIINAITGLDESVSLTNDAIVASDYVSNWISECMYTKLDELFMYCGWELLLELSYQMYYLRVVGWSNIVDYSYMILRRIPGAALNNLASTLSHPKLFRRAINLDIVAPLNAPHFASLDYIKMSVDAILWGCKRVINVLSNGGDLELVVTSEDSLILSDRSMNLIARKLTLLSLIHHNGLELPKIKGFSPDEKCFALTEFLRKVVNSGLSSIENLSNFMYNVENPRLAAFASNNYYLTRKLLNSIRDTESGQVAVTSYYESLEYIDSLKLTPHVPGTSCIEDDSLCTNDYIIWIIESNANLEKYPIPNSPEDDSNFHNFKLNAPSHHTLRPLGLSSTAWYKGISCCRYLERLKLPQGDHLYIAEGSGASMTIIEYLFPGRKIYYNSLFSSGDNPPQRNYAPMPTQFIESVPYKLWQAHTDQYPEIFEDFIPLWNGNAAMTDIGMTACVEFIINRVGPRTCSLVHVDLESSASLNQQCLSKPIINAIITATTVLCPHGVLILKYSWLPFTRFSTLITFLWCYFERITVLRSTYSDPANHEVYLICILANNFAFQTVSQATGMAMTLTDQGFTLISPERINQYWDGHLKQERIVAEAIDKVVLGENALFNSSDNELILKCGGTPNARNLIDIEPVATFIEFEQLICTMLTTHLKEIIDITRSGTQDYESLLLTPYNLGLLGKISTIVRLLTERILNHTIRNWLILPPSLRMIVKQDLEFGIFRITSILNSDRFLKLSPNRKYLIAQLTAGYIRKLIEGDCNIDLTRPIQKQIWKALGCVVYCHDPMDQRESTEFIDININEEIDRGIDGEEI</sequence>
<gene>
    <name type="primary">L</name>
</gene>
<name>L_PIV5</name>
<keyword id="KW-0002">3D-structure</keyword>
<keyword id="KW-0067">ATP-binding</keyword>
<keyword id="KW-1035">Host cytoplasm</keyword>
<keyword id="KW-0378">Hydrolase</keyword>
<keyword id="KW-0489">Methyltransferase</keyword>
<keyword id="KW-0506">mRNA capping</keyword>
<keyword id="KW-0507">mRNA processing</keyword>
<keyword id="KW-0511">Multifunctional enzyme</keyword>
<keyword id="KW-0547">Nucleotide-binding</keyword>
<keyword id="KW-0548">Nucleotidyltransferase</keyword>
<keyword id="KW-1185">Reference proteome</keyword>
<keyword id="KW-0696">RNA-directed RNA polymerase</keyword>
<keyword id="KW-0949">S-adenosyl-L-methionine</keyword>
<keyword id="KW-0808">Transferase</keyword>
<keyword id="KW-0693">Viral RNA replication</keyword>
<keyword id="KW-0946">Virion</keyword>
<accession>Q88434</accession>
<proteinExistence type="evidence at protein level"/>
<comment type="function">
    <text evidence="2">RNA-directed RNA polymerase that catalyzes the transcription of viral mRNAs, their capping and polyadenylation. The template is composed of the viral RNA tightly encapsidated by the nucleoprotein (N). The viral polymerase binds to the genomic RNA at the 3' leader promoter, and transcribes subsequently all viral mRNAs with a decreasing efficiency. The first gene is the most transcribed, and the last the least transcribed. The viral phosphoprotein acts as a processivity factor. Capping is concomitant with initiation of mRNA transcription. Indeed, a GDP polyribonucleotidyl transferase (PRNTase) adds the cap structure when the nascent RNA chain length has reached few nucleotides. Ribose 2'-O methylation of viral mRNA cap precedes and facilitates subsequent guanine-N-7 methylation, both activities being carried by the viral polymerase. Polyadenylation of mRNAs occur by a stuttering mechanism at a slipery stop site present at the end viral genes. After finishing transcription of a mRNA, the polymerase can resume transcription of the downstream gene.</text>
</comment>
<comment type="function">
    <text evidence="2">RNA-directed RNA polymerase that catalyzes the replication of viral genomic RNA. The template is composed of the viral RNA tightly encapsidated by the nucleoprotein (N). The replicase mode is dependent on intracellular N protein concentration. In this mode, the polymerase replicates the whole viral genome without recognizing transcriptional signals, and the replicated genome is not caped or polyadenylated.</text>
</comment>
<comment type="catalytic activity">
    <reaction evidence="5">
        <text>RNA(n) + a ribonucleoside 5'-triphosphate = RNA(n+1) + diphosphate</text>
        <dbReference type="Rhea" id="RHEA:21248"/>
        <dbReference type="Rhea" id="RHEA-COMP:14527"/>
        <dbReference type="Rhea" id="RHEA-COMP:17342"/>
        <dbReference type="ChEBI" id="CHEBI:33019"/>
        <dbReference type="ChEBI" id="CHEBI:61557"/>
        <dbReference type="ChEBI" id="CHEBI:140395"/>
        <dbReference type="EC" id="2.7.7.48"/>
    </reaction>
</comment>
<comment type="catalytic activity">
    <reaction evidence="2">
        <text>a 5'-end (5'-triphosphoguanosine)-adenylyl-adenylyl-cytidylyl-adenosine in mRNA + 2 S-adenosyl-L-methionine = a 5'-end (N(7)-methyl 5'-triphosphoguanosine)-(2'-O-methyladenylyl)-adenylyl-cytidylyl-adenosine in mRNA + 2 S-adenosyl-L-homocysteine + H(+)</text>
        <dbReference type="Rhea" id="RHEA:65376"/>
        <dbReference type="Rhea" id="RHEA-COMP:16797"/>
        <dbReference type="Rhea" id="RHEA-COMP:16798"/>
        <dbReference type="ChEBI" id="CHEBI:15378"/>
        <dbReference type="ChEBI" id="CHEBI:57856"/>
        <dbReference type="ChEBI" id="CHEBI:59789"/>
        <dbReference type="ChEBI" id="CHEBI:156483"/>
        <dbReference type="ChEBI" id="CHEBI:156484"/>
        <dbReference type="EC" id="2.1.1.375"/>
    </reaction>
</comment>
<comment type="catalytic activity">
    <reaction evidence="2">
        <text>a 5'-end (5'-triphosphoguanosine)-adenylyl-adenylyl-cytidylyl-adenosine in mRNA + S-adenosyl-L-methionine = a 5'-end (5'-triphosphoguanosine)-(2'-O-methyladenylyl)-adenylyl-cytidylyl-adenosine in mRNA + S-adenosyl-L-homocysteine + H(+)</text>
        <dbReference type="Rhea" id="RHEA:65380"/>
        <dbReference type="Rhea" id="RHEA-COMP:16797"/>
        <dbReference type="Rhea" id="RHEA-COMP:16801"/>
        <dbReference type="ChEBI" id="CHEBI:15378"/>
        <dbReference type="ChEBI" id="CHEBI:57856"/>
        <dbReference type="ChEBI" id="CHEBI:59789"/>
        <dbReference type="ChEBI" id="CHEBI:156482"/>
        <dbReference type="ChEBI" id="CHEBI:156484"/>
    </reaction>
</comment>
<comment type="catalytic activity">
    <reaction evidence="3">
        <text>a 5'-end triphospho-adenylyl-adenylyl-cytidylyl-adenosine in mRNA + GDP + H(+) = a 5'-end (5'-triphosphoguanosine)-adenylyl-adenylyl-cytidylyl-adenosine in mRNA + diphosphate</text>
        <dbReference type="Rhea" id="RHEA:65436"/>
        <dbReference type="Rhea" id="RHEA-COMP:16797"/>
        <dbReference type="Rhea" id="RHEA-COMP:16799"/>
        <dbReference type="ChEBI" id="CHEBI:15378"/>
        <dbReference type="ChEBI" id="CHEBI:33019"/>
        <dbReference type="ChEBI" id="CHEBI:58189"/>
        <dbReference type="ChEBI" id="CHEBI:156484"/>
        <dbReference type="ChEBI" id="CHEBI:156503"/>
        <dbReference type="EC" id="2.7.7.88"/>
    </reaction>
</comment>
<comment type="catalytic activity">
    <reaction evidence="2">
        <text>a 5'-end (5'-triphosphoguanosine)-(2'-O-methyladenylyl)-adenylyl-cytidylyl-adenosine in mRNA + S-adenosyl-L-methionine = a 5'-end (N(7)-methyl 5'-triphosphoguanosine)-(2'-O-methyladenylyl)-adenylyl-cytidylyl-adenosine in mRNA + S-adenosyl-L-homocysteine</text>
        <dbReference type="Rhea" id="RHEA:65440"/>
        <dbReference type="Rhea" id="RHEA-COMP:16798"/>
        <dbReference type="Rhea" id="RHEA-COMP:16801"/>
        <dbReference type="ChEBI" id="CHEBI:57856"/>
        <dbReference type="ChEBI" id="CHEBI:59789"/>
        <dbReference type="ChEBI" id="CHEBI:156482"/>
        <dbReference type="ChEBI" id="CHEBI:156483"/>
    </reaction>
</comment>
<comment type="catalytic activity">
    <reaction evidence="3">
        <text>GTP + H2O = GDP + phosphate + H(+)</text>
        <dbReference type="Rhea" id="RHEA:19669"/>
        <dbReference type="ChEBI" id="CHEBI:15377"/>
        <dbReference type="ChEBI" id="CHEBI:15378"/>
        <dbReference type="ChEBI" id="CHEBI:37565"/>
        <dbReference type="ChEBI" id="CHEBI:43474"/>
        <dbReference type="ChEBI" id="CHEBI:58189"/>
    </reaction>
</comment>
<comment type="subunit">
    <text evidence="1">Interacts with the P protein.</text>
</comment>
<comment type="subcellular location">
    <subcellularLocation>
        <location evidence="8">Virion</location>
    </subcellularLocation>
    <subcellularLocation>
        <location evidence="1">Host cytoplasm</location>
    </subcellularLocation>
</comment>
<comment type="similarity">
    <text evidence="8">Belongs to the paramyxovirus L protein family.</text>
</comment>
<organismHost>
    <name type="scientific">Canis lupus familiaris</name>
    <name type="common">Dog</name>
    <name type="synonym">Canis familiaris</name>
    <dbReference type="NCBI Taxonomy" id="9615"/>
</organismHost>
<organismHost>
    <name type="scientific">Homo sapiens</name>
    <name type="common">Human</name>
    <dbReference type="NCBI Taxonomy" id="9606"/>
</organismHost>